<name>PSBC_OLTVI</name>
<accession>Q20EU6</accession>
<organism>
    <name type="scientific">Oltmannsiellopsis viridis</name>
    <name type="common">Marine flagellate</name>
    <name type="synonym">Oltmannsiella viridis</name>
    <dbReference type="NCBI Taxonomy" id="51324"/>
    <lineage>
        <taxon>Eukaryota</taxon>
        <taxon>Viridiplantae</taxon>
        <taxon>Chlorophyta</taxon>
        <taxon>Ulvophyceae</taxon>
        <taxon>Oltmannsiellopsidales</taxon>
        <taxon>Oltmannsiellopsidaceae</taxon>
        <taxon>Oltmannsiellopsis</taxon>
    </lineage>
</organism>
<protein>
    <recommendedName>
        <fullName evidence="1">Photosystem II CP43 reaction center protein</fullName>
    </recommendedName>
    <alternativeName>
        <fullName evidence="1">PSII 43 kDa protein</fullName>
    </alternativeName>
    <alternativeName>
        <fullName evidence="1">Protein CP-43</fullName>
    </alternativeName>
</protein>
<gene>
    <name evidence="1" type="primary">psbC</name>
</gene>
<sequence>METLFNGSLTVGGRDQESTGFAWWSGNARLINLSGKLLGAHVAHAGLIVFWAGAMNLFEVAHFVPEKPMYEQGLILLPHIASLGYGVGPGGEIIDTFPYFVSGVLHLISSAVLGFGGIYHALIGPETLEESFPFFGYIWKDKNKMTTILGIHLILLGFGAWLLVWKAMYFGGVYDTWAAGGGDVRIISNPTTNPGVIFGYLLKSPFGGDGWICSVDNMEDLIGGHIWIGTLEIFGGIWHILTKPWGWARRAFVWSGEAYLSYSLAAISAMGFIACCMSWFNNTAYPSEFYGPTGPEASQAQAFTFLVRDQRLGANVASAQGPTGLGKYLMRSPTGEIIFGGETMRFWDFRGPWLEPLRGPNGLDLNKLKNDIQPWQERRSAEYMTHAPLGSLNSVGGVATEINSINYVSPRSWLATSHFCLGFFFFVGHLWHAGRARAAAAGFEKGIDRDTEPVLSMKPID</sequence>
<evidence type="ECO:0000255" key="1">
    <source>
        <dbReference type="HAMAP-Rule" id="MF_01496"/>
    </source>
</evidence>
<proteinExistence type="inferred from homology"/>
<feature type="propeptide" id="PRO_0000431183" evidence="1">
    <location>
        <begin position="1"/>
        <end position="2"/>
    </location>
</feature>
<feature type="chain" id="PRO_0000361454" description="Photosystem II CP43 reaction center protein" evidence="1">
    <location>
        <begin position="3"/>
        <end position="461"/>
    </location>
</feature>
<feature type="transmembrane region" description="Helical" evidence="1">
    <location>
        <begin position="57"/>
        <end position="81"/>
    </location>
</feature>
<feature type="transmembrane region" description="Helical" evidence="1">
    <location>
        <begin position="122"/>
        <end position="143"/>
    </location>
</feature>
<feature type="transmembrane region" description="Helical" evidence="1">
    <location>
        <begin position="166"/>
        <end position="188"/>
    </location>
</feature>
<feature type="transmembrane region" description="Helical" evidence="1">
    <location>
        <begin position="243"/>
        <end position="263"/>
    </location>
</feature>
<feature type="transmembrane region" description="Helical" evidence="1">
    <location>
        <begin position="279"/>
        <end position="300"/>
    </location>
</feature>
<feature type="transmembrane region" description="Helical" evidence="1">
    <location>
        <begin position="435"/>
        <end position="459"/>
    </location>
</feature>
<feature type="binding site" evidence="1">
    <location>
        <position position="355"/>
    </location>
    <ligand>
        <name>[CaMn4O5] cluster</name>
        <dbReference type="ChEBI" id="CHEBI:189552"/>
    </ligand>
</feature>
<feature type="modified residue" description="N-acetylthreonine" evidence="1">
    <location>
        <position position="3"/>
    </location>
</feature>
<feature type="modified residue" description="Phosphothreonine" evidence="1">
    <location>
        <position position="3"/>
    </location>
</feature>
<keyword id="KW-0007">Acetylation</keyword>
<keyword id="KW-0148">Chlorophyll</keyword>
<keyword id="KW-0150">Chloroplast</keyword>
<keyword id="KW-0157">Chromophore</keyword>
<keyword id="KW-0464">Manganese</keyword>
<keyword id="KW-0472">Membrane</keyword>
<keyword id="KW-0479">Metal-binding</keyword>
<keyword id="KW-0597">Phosphoprotein</keyword>
<keyword id="KW-0602">Photosynthesis</keyword>
<keyword id="KW-0604">Photosystem II</keyword>
<keyword id="KW-0934">Plastid</keyword>
<keyword id="KW-0793">Thylakoid</keyword>
<keyword id="KW-0812">Transmembrane</keyword>
<keyword id="KW-1133">Transmembrane helix</keyword>
<reference key="1">
    <citation type="journal article" date="2006" name="BMC Biol.">
        <title>The complete chloroplast DNA sequence of the green alga Oltmannsiellopsis viridis reveals a distinctive quadripartite architecture in the chloroplast genome of early diverging ulvophytes.</title>
        <authorList>
            <person name="Pombert J.-F."/>
            <person name="Lemieux C."/>
            <person name="Turmel M."/>
        </authorList>
    </citation>
    <scope>NUCLEOTIDE SEQUENCE [LARGE SCALE GENOMIC DNA]</scope>
</reference>
<dbReference type="EMBL" id="DQ291132">
    <property type="protein sequence ID" value="ABB81967.1"/>
    <property type="molecule type" value="Genomic_DNA"/>
</dbReference>
<dbReference type="RefSeq" id="YP_635899.1">
    <property type="nucleotide sequence ID" value="NC_008099.1"/>
</dbReference>
<dbReference type="SMR" id="Q20EU6"/>
<dbReference type="GeneID" id="4100106"/>
<dbReference type="GO" id="GO:0009535">
    <property type="term" value="C:chloroplast thylakoid membrane"/>
    <property type="evidence" value="ECO:0007669"/>
    <property type="project" value="UniProtKB-SubCell"/>
</dbReference>
<dbReference type="GO" id="GO:0009523">
    <property type="term" value="C:photosystem II"/>
    <property type="evidence" value="ECO:0007669"/>
    <property type="project" value="UniProtKB-KW"/>
</dbReference>
<dbReference type="GO" id="GO:0016168">
    <property type="term" value="F:chlorophyll binding"/>
    <property type="evidence" value="ECO:0007669"/>
    <property type="project" value="UniProtKB-UniRule"/>
</dbReference>
<dbReference type="GO" id="GO:0045156">
    <property type="term" value="F:electron transporter, transferring electrons within the cyclic electron transport pathway of photosynthesis activity"/>
    <property type="evidence" value="ECO:0007669"/>
    <property type="project" value="InterPro"/>
</dbReference>
<dbReference type="GO" id="GO:0046872">
    <property type="term" value="F:metal ion binding"/>
    <property type="evidence" value="ECO:0007669"/>
    <property type="project" value="UniProtKB-KW"/>
</dbReference>
<dbReference type="GO" id="GO:0009772">
    <property type="term" value="P:photosynthetic electron transport in photosystem II"/>
    <property type="evidence" value="ECO:0007669"/>
    <property type="project" value="InterPro"/>
</dbReference>
<dbReference type="FunFam" id="1.10.10.670:FF:000001">
    <property type="entry name" value="Photosystem II CP43 reaction center protein"/>
    <property type="match status" value="1"/>
</dbReference>
<dbReference type="Gene3D" id="1.10.10.670">
    <property type="entry name" value="photosystem ii from thermosynechococcus elongatus"/>
    <property type="match status" value="1"/>
</dbReference>
<dbReference type="HAMAP" id="MF_01496">
    <property type="entry name" value="PSII_PsbC_CP43"/>
    <property type="match status" value="1"/>
</dbReference>
<dbReference type="InterPro" id="IPR000932">
    <property type="entry name" value="PS_antenna-like"/>
</dbReference>
<dbReference type="InterPro" id="IPR036001">
    <property type="entry name" value="PS_II_antenna-like_sf"/>
</dbReference>
<dbReference type="InterPro" id="IPR005869">
    <property type="entry name" value="PSII_PsbC"/>
</dbReference>
<dbReference type="InterPro" id="IPR044900">
    <property type="entry name" value="PSII_PsbC_sf"/>
</dbReference>
<dbReference type="NCBIfam" id="TIGR01153">
    <property type="entry name" value="psbC"/>
    <property type="match status" value="1"/>
</dbReference>
<dbReference type="Pfam" id="PF00421">
    <property type="entry name" value="PSII"/>
    <property type="match status" value="1"/>
</dbReference>
<dbReference type="SUPFAM" id="SSF161077">
    <property type="entry name" value="Photosystem II antenna protein-like"/>
    <property type="match status" value="1"/>
</dbReference>
<geneLocation type="chloroplast"/>
<comment type="function">
    <text evidence="1">One of the components of the core complex of photosystem II (PSII). It binds chlorophyll and helps catalyze the primary light-induced photochemical processes of PSII. PSII is a light-driven water:plastoquinone oxidoreductase, using light energy to abstract electrons from H(2)O, generating O(2) and a proton gradient subsequently used for ATP formation.</text>
</comment>
<comment type="cofactor">
    <text evidence="1">Binds multiple chlorophylls and provides some of the ligands for the Ca-4Mn-5O cluster of the oxygen-evolving complex. It may also provide a ligand for a Cl- that is required for oxygen evolution. PSII binds additional chlorophylls, carotenoids and specific lipids.</text>
</comment>
<comment type="subunit">
    <text evidence="1">PSII is composed of 1 copy each of membrane proteins PsbA, PsbB, PsbC, PsbD, PsbE, PsbF, PsbH, PsbI, PsbJ, PsbK, PsbL, PsbM, PsbT, PsbX, PsbY, PsbZ, Psb30/Ycf12, at least 3 peripheral proteins of the oxygen-evolving complex and a large number of cofactors. It forms dimeric complexes.</text>
</comment>
<comment type="subcellular location">
    <subcellularLocation>
        <location evidence="1">Plastid</location>
        <location evidence="1">Chloroplast thylakoid membrane</location>
        <topology evidence="1">Multi-pass membrane protein</topology>
    </subcellularLocation>
</comment>
<comment type="similarity">
    <text evidence="1">Belongs to the PsbB/PsbC family. PsbC subfamily.</text>
</comment>